<feature type="chain" id="PRO_1000049918" description="Large ribosomal subunit protein eL31">
    <location>
        <begin position="1"/>
        <end position="83"/>
    </location>
</feature>
<keyword id="KW-0687">Ribonucleoprotein</keyword>
<keyword id="KW-0689">Ribosomal protein</keyword>
<comment type="similarity">
    <text evidence="1">Belongs to the eukaryotic ribosomal protein eL31 family.</text>
</comment>
<dbReference type="EMBL" id="CP000742">
    <property type="protein sequence ID" value="ABR54977.1"/>
    <property type="molecule type" value="Genomic_DNA"/>
</dbReference>
<dbReference type="RefSeq" id="WP_012065892.1">
    <property type="nucleotide sequence ID" value="NC_009634.1"/>
</dbReference>
<dbReference type="SMR" id="A6UR55"/>
<dbReference type="STRING" id="406327.Mevan_1077"/>
<dbReference type="GeneID" id="5325350"/>
<dbReference type="KEGG" id="mvn:Mevan_1077"/>
<dbReference type="eggNOG" id="arCOG04473">
    <property type="taxonomic scope" value="Archaea"/>
</dbReference>
<dbReference type="HOGENOM" id="CLU_112570_3_2_2"/>
<dbReference type="OrthoDB" id="10127at2157"/>
<dbReference type="Proteomes" id="UP000001107">
    <property type="component" value="Chromosome"/>
</dbReference>
<dbReference type="GO" id="GO:0022625">
    <property type="term" value="C:cytosolic large ribosomal subunit"/>
    <property type="evidence" value="ECO:0007669"/>
    <property type="project" value="TreeGrafter"/>
</dbReference>
<dbReference type="GO" id="GO:0003735">
    <property type="term" value="F:structural constituent of ribosome"/>
    <property type="evidence" value="ECO:0007669"/>
    <property type="project" value="InterPro"/>
</dbReference>
<dbReference type="GO" id="GO:0002181">
    <property type="term" value="P:cytoplasmic translation"/>
    <property type="evidence" value="ECO:0007669"/>
    <property type="project" value="TreeGrafter"/>
</dbReference>
<dbReference type="CDD" id="cd00463">
    <property type="entry name" value="Ribosomal_L31e"/>
    <property type="match status" value="1"/>
</dbReference>
<dbReference type="Gene3D" id="3.10.440.10">
    <property type="match status" value="1"/>
</dbReference>
<dbReference type="HAMAP" id="MF_00410">
    <property type="entry name" value="Ribosomal_eL31"/>
    <property type="match status" value="1"/>
</dbReference>
<dbReference type="InterPro" id="IPR000054">
    <property type="entry name" value="Ribosomal_eL31"/>
</dbReference>
<dbReference type="InterPro" id="IPR020052">
    <property type="entry name" value="Ribosomal_eL31_CS"/>
</dbReference>
<dbReference type="InterPro" id="IPR023621">
    <property type="entry name" value="Ribosomal_eL31_dom_sf"/>
</dbReference>
<dbReference type="NCBIfam" id="NF002258">
    <property type="entry name" value="PRK01192.1-1"/>
    <property type="match status" value="1"/>
</dbReference>
<dbReference type="PANTHER" id="PTHR10956">
    <property type="entry name" value="60S RIBOSOMAL PROTEIN L31"/>
    <property type="match status" value="1"/>
</dbReference>
<dbReference type="PANTHER" id="PTHR10956:SF0">
    <property type="entry name" value="60S RIBOSOMAL PROTEIN L31"/>
    <property type="match status" value="1"/>
</dbReference>
<dbReference type="Pfam" id="PF01198">
    <property type="entry name" value="Ribosomal_L31e"/>
    <property type="match status" value="1"/>
</dbReference>
<dbReference type="SMART" id="SM01380">
    <property type="entry name" value="Ribosomal_L31e"/>
    <property type="match status" value="1"/>
</dbReference>
<dbReference type="SUPFAM" id="SSF54575">
    <property type="entry name" value="Ribosomal protein L31e"/>
    <property type="match status" value="1"/>
</dbReference>
<dbReference type="PROSITE" id="PS01144">
    <property type="entry name" value="RIBOSOMAL_L31E"/>
    <property type="match status" value="1"/>
</dbReference>
<gene>
    <name evidence="1" type="primary">rpl31e</name>
    <name type="ordered locus">Mevan_1077</name>
</gene>
<accession>A6UR55</accession>
<reference key="1">
    <citation type="submission" date="2007-06" db="EMBL/GenBank/DDBJ databases">
        <title>Complete sequence of Methanococcus vannielii SB.</title>
        <authorList>
            <consortium name="US DOE Joint Genome Institute"/>
            <person name="Copeland A."/>
            <person name="Lucas S."/>
            <person name="Lapidus A."/>
            <person name="Barry K."/>
            <person name="Glavina del Rio T."/>
            <person name="Dalin E."/>
            <person name="Tice H."/>
            <person name="Pitluck S."/>
            <person name="Chain P."/>
            <person name="Malfatti S."/>
            <person name="Shin M."/>
            <person name="Vergez L."/>
            <person name="Schmutz J."/>
            <person name="Larimer F."/>
            <person name="Land M."/>
            <person name="Hauser L."/>
            <person name="Kyrpides N."/>
            <person name="Anderson I."/>
            <person name="Sieprawska-Lupa M."/>
            <person name="Whitman W.B."/>
            <person name="Richardson P."/>
        </authorList>
    </citation>
    <scope>NUCLEOTIDE SEQUENCE [LARGE SCALE GENOMIC DNA]</scope>
    <source>
        <strain>ATCC 35089 / DSM 1224 / JCM 13029 / OCM 148 / SB</strain>
    </source>
</reference>
<evidence type="ECO:0000255" key="1">
    <source>
        <dbReference type="HAMAP-Rule" id="MF_00410"/>
    </source>
</evidence>
<evidence type="ECO:0000305" key="2"/>
<protein>
    <recommendedName>
        <fullName evidence="1">Large ribosomal subunit protein eL31</fullName>
    </recommendedName>
    <alternativeName>
        <fullName evidence="2">50S ribosomal protein L31e</fullName>
    </alternativeName>
</protein>
<sequence length="83" mass="9572">MEEERIYTIPLRDVTNKSPTTKRAPRAIRAIRAFLMKHMKSDVVKLDNSINEKVWERSLNKIPAKVRVKAVKEGDVVKATLIE</sequence>
<proteinExistence type="inferred from homology"/>
<organism>
    <name type="scientific">Methanococcus vannielii (strain ATCC 35089 / DSM 1224 / JCM 13029 / OCM 148 / SB)</name>
    <dbReference type="NCBI Taxonomy" id="406327"/>
    <lineage>
        <taxon>Archaea</taxon>
        <taxon>Methanobacteriati</taxon>
        <taxon>Methanobacteriota</taxon>
        <taxon>Methanomada group</taxon>
        <taxon>Methanococci</taxon>
        <taxon>Methanococcales</taxon>
        <taxon>Methanococcaceae</taxon>
        <taxon>Methanococcus</taxon>
    </lineage>
</organism>
<name>RL31_METVS</name>